<reference evidence="11" key="1">
    <citation type="journal article" date="1997" name="Development">
        <title>who encodes a KH RNA binding protein that functions in muscle development.</title>
        <authorList>
            <person name="Baehrecke E.H."/>
        </authorList>
    </citation>
    <scope>NUCLEOTIDE SEQUENCE [MRNA] (ISOFORM ZYGOTIC)</scope>
    <scope>FUNCTION</scope>
    <scope>INDUCTION</scope>
    <scope>TISSUE SPECIFICITY</scope>
    <scope>MUTAGENESIS OF ARG-185</scope>
</reference>
<reference evidence="11" key="2">
    <citation type="journal article" date="1997" name="Development">
        <title>The held out wings (how) Drosophila gene encodes a putative RNA-binding protein involved in the control of muscular and cardiac activity.</title>
        <authorList>
            <person name="Zaffran S."/>
            <person name="Astier M."/>
            <person name="Gratecos D."/>
            <person name="Semeriva M."/>
        </authorList>
    </citation>
    <scope>NUCLEOTIDE SEQUENCE [MRNA] (ISOFORM ZYGOTIC)</scope>
    <scope>FUNCTION</scope>
    <scope>SUBCELLULAR LOCATION</scope>
    <source>
        <strain evidence="6">Oregon-R</strain>
    </source>
</reference>
<reference evidence="11" key="3">
    <citation type="journal article" date="1997" name="Dev. Biol.">
        <title>A novel KH-domain protein mediates cell adhesion processes in Drosophila.</title>
        <authorList>
            <person name="Lo P.C.H."/>
            <person name="Frasch M."/>
        </authorList>
    </citation>
    <scope>NUCLEOTIDE SEQUENCE [MRNA] (ISOFORM ZYGOTIC)</scope>
    <scope>PARTIAL NUCLEOTIDE SEQUENCE [MRNA] (ISOFORM MATERNAL)</scope>
    <scope>FUNCTION</scope>
    <scope>TISSUE SPECIFICITY</scope>
    <scope>DEVELOPMENTAL STAGE</scope>
    <scope>DISRUPTION PHENOTYPE</scope>
    <source>
        <tissue evidence="8">Embryo</tissue>
    </source>
</reference>
<reference evidence="11" key="4">
    <citation type="journal article" date="1997" name="Gene">
        <title>A Drosophila muscle-specific gene related to the mouse quaking locus.</title>
        <authorList>
            <person name="Fyrberg C."/>
            <person name="Becker J."/>
            <person name="Barthmaier P."/>
            <person name="Mahaffey J."/>
            <person name="Fyrberg E."/>
        </authorList>
    </citation>
    <scope>NUCLEOTIDE SEQUENCE [MRNA] (ISOFORM ZYGOTIC)</scope>
    <scope>TISSUE SPECIFICITY</scope>
    <scope>DEVELOPMENTAL STAGE</scope>
    <source>
        <strain>Canton-S</strain>
        <tissue evidence="7">Embryo</tissue>
    </source>
</reference>
<reference evidence="11" key="5">
    <citation type="journal article" date="2000" name="Science">
        <title>The genome sequence of Drosophila melanogaster.</title>
        <authorList>
            <person name="Adams M.D."/>
            <person name="Celniker S.E."/>
            <person name="Holt R.A."/>
            <person name="Evans C.A."/>
            <person name="Gocayne J.D."/>
            <person name="Amanatides P.G."/>
            <person name="Scherer S.E."/>
            <person name="Li P.W."/>
            <person name="Hoskins R.A."/>
            <person name="Galle R.F."/>
            <person name="George R.A."/>
            <person name="Lewis S.E."/>
            <person name="Richards S."/>
            <person name="Ashburner M."/>
            <person name="Henderson S.N."/>
            <person name="Sutton G.G."/>
            <person name="Wortman J.R."/>
            <person name="Yandell M.D."/>
            <person name="Zhang Q."/>
            <person name="Chen L.X."/>
            <person name="Brandon R.C."/>
            <person name="Rogers Y.-H.C."/>
            <person name="Blazej R.G."/>
            <person name="Champe M."/>
            <person name="Pfeiffer B.D."/>
            <person name="Wan K.H."/>
            <person name="Doyle C."/>
            <person name="Baxter E.G."/>
            <person name="Helt G."/>
            <person name="Nelson C.R."/>
            <person name="Miklos G.L.G."/>
            <person name="Abril J.F."/>
            <person name="Agbayani A."/>
            <person name="An H.-J."/>
            <person name="Andrews-Pfannkoch C."/>
            <person name="Baldwin D."/>
            <person name="Ballew R.M."/>
            <person name="Basu A."/>
            <person name="Baxendale J."/>
            <person name="Bayraktaroglu L."/>
            <person name="Beasley E.M."/>
            <person name="Beeson K.Y."/>
            <person name="Benos P.V."/>
            <person name="Berman B.P."/>
            <person name="Bhandari D."/>
            <person name="Bolshakov S."/>
            <person name="Borkova D."/>
            <person name="Botchan M.R."/>
            <person name="Bouck J."/>
            <person name="Brokstein P."/>
            <person name="Brottier P."/>
            <person name="Burtis K.C."/>
            <person name="Busam D.A."/>
            <person name="Butler H."/>
            <person name="Cadieu E."/>
            <person name="Center A."/>
            <person name="Chandra I."/>
            <person name="Cherry J.M."/>
            <person name="Cawley S."/>
            <person name="Dahlke C."/>
            <person name="Davenport L.B."/>
            <person name="Davies P."/>
            <person name="de Pablos B."/>
            <person name="Delcher A."/>
            <person name="Deng Z."/>
            <person name="Mays A.D."/>
            <person name="Dew I."/>
            <person name="Dietz S.M."/>
            <person name="Dodson K."/>
            <person name="Doup L.E."/>
            <person name="Downes M."/>
            <person name="Dugan-Rocha S."/>
            <person name="Dunkov B.C."/>
            <person name="Dunn P."/>
            <person name="Durbin K.J."/>
            <person name="Evangelista C.C."/>
            <person name="Ferraz C."/>
            <person name="Ferriera S."/>
            <person name="Fleischmann W."/>
            <person name="Fosler C."/>
            <person name="Gabrielian A.E."/>
            <person name="Garg N.S."/>
            <person name="Gelbart W.M."/>
            <person name="Glasser K."/>
            <person name="Glodek A."/>
            <person name="Gong F."/>
            <person name="Gorrell J.H."/>
            <person name="Gu Z."/>
            <person name="Guan P."/>
            <person name="Harris M."/>
            <person name="Harris N.L."/>
            <person name="Harvey D.A."/>
            <person name="Heiman T.J."/>
            <person name="Hernandez J.R."/>
            <person name="Houck J."/>
            <person name="Hostin D."/>
            <person name="Houston K.A."/>
            <person name="Howland T.J."/>
            <person name="Wei M.-H."/>
            <person name="Ibegwam C."/>
            <person name="Jalali M."/>
            <person name="Kalush F."/>
            <person name="Karpen G.H."/>
            <person name="Ke Z."/>
            <person name="Kennison J.A."/>
            <person name="Ketchum K.A."/>
            <person name="Kimmel B.E."/>
            <person name="Kodira C.D."/>
            <person name="Kraft C.L."/>
            <person name="Kravitz S."/>
            <person name="Kulp D."/>
            <person name="Lai Z."/>
            <person name="Lasko P."/>
            <person name="Lei Y."/>
            <person name="Levitsky A.A."/>
            <person name="Li J.H."/>
            <person name="Li Z."/>
            <person name="Liang Y."/>
            <person name="Lin X."/>
            <person name="Liu X."/>
            <person name="Mattei B."/>
            <person name="McIntosh T.C."/>
            <person name="McLeod M.P."/>
            <person name="McPherson D."/>
            <person name="Merkulov G."/>
            <person name="Milshina N.V."/>
            <person name="Mobarry C."/>
            <person name="Morris J."/>
            <person name="Moshrefi A."/>
            <person name="Mount S.M."/>
            <person name="Moy M."/>
            <person name="Murphy B."/>
            <person name="Murphy L."/>
            <person name="Muzny D.M."/>
            <person name="Nelson D.L."/>
            <person name="Nelson D.R."/>
            <person name="Nelson K.A."/>
            <person name="Nixon K."/>
            <person name="Nusskern D.R."/>
            <person name="Pacleb J.M."/>
            <person name="Palazzolo M."/>
            <person name="Pittman G.S."/>
            <person name="Pan S."/>
            <person name="Pollard J."/>
            <person name="Puri V."/>
            <person name="Reese M.G."/>
            <person name="Reinert K."/>
            <person name="Remington K."/>
            <person name="Saunders R.D.C."/>
            <person name="Scheeler F."/>
            <person name="Shen H."/>
            <person name="Shue B.C."/>
            <person name="Siden-Kiamos I."/>
            <person name="Simpson M."/>
            <person name="Skupski M.P."/>
            <person name="Smith T.J."/>
            <person name="Spier E."/>
            <person name="Spradling A.C."/>
            <person name="Stapleton M."/>
            <person name="Strong R."/>
            <person name="Sun E."/>
            <person name="Svirskas R."/>
            <person name="Tector C."/>
            <person name="Turner R."/>
            <person name="Venter E."/>
            <person name="Wang A.H."/>
            <person name="Wang X."/>
            <person name="Wang Z.-Y."/>
            <person name="Wassarman D.A."/>
            <person name="Weinstock G.M."/>
            <person name="Weissenbach J."/>
            <person name="Williams S.M."/>
            <person name="Woodage T."/>
            <person name="Worley K.C."/>
            <person name="Wu D."/>
            <person name="Yang S."/>
            <person name="Yao Q.A."/>
            <person name="Ye J."/>
            <person name="Yeh R.-F."/>
            <person name="Zaveri J.S."/>
            <person name="Zhan M."/>
            <person name="Zhang G."/>
            <person name="Zhao Q."/>
            <person name="Zheng L."/>
            <person name="Zheng X.H."/>
            <person name="Zhong F.N."/>
            <person name="Zhong W."/>
            <person name="Zhou X."/>
            <person name="Zhu S.C."/>
            <person name="Zhu X."/>
            <person name="Smith H.O."/>
            <person name="Gibbs R.A."/>
            <person name="Myers E.W."/>
            <person name="Rubin G.M."/>
            <person name="Venter J.C."/>
        </authorList>
    </citation>
    <scope>NUCLEOTIDE SEQUENCE [LARGE SCALE GENOMIC DNA]</scope>
    <source>
        <strain evidence="2">Berkeley</strain>
    </source>
</reference>
<reference evidence="11" key="6">
    <citation type="journal article" date="2002" name="Genome Biol.">
        <title>Annotation of the Drosophila melanogaster euchromatic genome: a systematic review.</title>
        <authorList>
            <person name="Misra S."/>
            <person name="Crosby M.A."/>
            <person name="Mungall C.J."/>
            <person name="Matthews B.B."/>
            <person name="Campbell K.S."/>
            <person name="Hradecky P."/>
            <person name="Huang Y."/>
            <person name="Kaminker J.S."/>
            <person name="Millburn G.H."/>
            <person name="Prochnik S.E."/>
            <person name="Smith C.D."/>
            <person name="Tupy J.L."/>
            <person name="Whitfield E.J."/>
            <person name="Bayraktaroglu L."/>
            <person name="Berman B.P."/>
            <person name="Bettencourt B.R."/>
            <person name="Celniker S.E."/>
            <person name="de Grey A.D.N.J."/>
            <person name="Drysdale R.A."/>
            <person name="Harris N.L."/>
            <person name="Richter J."/>
            <person name="Russo S."/>
            <person name="Schroeder A.J."/>
            <person name="Shu S.Q."/>
            <person name="Stapleton M."/>
            <person name="Yamada C."/>
            <person name="Ashburner M."/>
            <person name="Gelbart W.M."/>
            <person name="Rubin G.M."/>
            <person name="Lewis S.E."/>
        </authorList>
    </citation>
    <scope>GENOME REANNOTATION</scope>
    <scope>ALTERNATIVE SPLICING</scope>
    <source>
        <strain>Berkeley</strain>
    </source>
</reference>
<reference evidence="11" key="7">
    <citation type="journal article" date="2002" name="Genome Biol.">
        <title>A Drosophila full-length cDNA resource.</title>
        <authorList>
            <person name="Stapleton M."/>
            <person name="Carlson J.W."/>
            <person name="Brokstein P."/>
            <person name="Yu C."/>
            <person name="Champe M."/>
            <person name="George R.A."/>
            <person name="Guarin H."/>
            <person name="Kronmiller B."/>
            <person name="Pacleb J.M."/>
            <person name="Park S."/>
            <person name="Wan K.H."/>
            <person name="Rubin G.M."/>
            <person name="Celniker S.E."/>
        </authorList>
    </citation>
    <scope>NUCLEOTIDE SEQUENCE [LARGE SCALE MRNA] (ISOFORM ZYGOTIC)</scope>
    <source>
        <strain evidence="3">Berkeley</strain>
        <tissue evidence="3">Embryo</tissue>
    </source>
</reference>
<reference key="8">
    <citation type="journal article" date="2013" name="Genes Dev.">
        <title>Sex-lethal promotes nuclear retention of msl2 mRNA via interactions with the STAR protein HOW.</title>
        <authorList>
            <person name="Graindorge A."/>
            <person name="Carre C."/>
            <person name="Gebauer F."/>
        </authorList>
    </citation>
    <scope>FUNCTION</scope>
    <scope>SUBUNIT</scope>
    <scope>SUBCELLULAR LOCATION</scope>
    <scope>INTERACTION WITH SXL</scope>
    <scope>MUTAGENESIS OF GLU-106 AND ARG-185</scope>
</reference>
<organism evidence="12">
    <name type="scientific">Drosophila melanogaster</name>
    <name type="common">Fruit fly</name>
    <dbReference type="NCBI Taxonomy" id="7227"/>
    <lineage>
        <taxon>Eukaryota</taxon>
        <taxon>Metazoa</taxon>
        <taxon>Ecdysozoa</taxon>
        <taxon>Arthropoda</taxon>
        <taxon>Hexapoda</taxon>
        <taxon>Insecta</taxon>
        <taxon>Pterygota</taxon>
        <taxon>Neoptera</taxon>
        <taxon>Endopterygota</taxon>
        <taxon>Diptera</taxon>
        <taxon>Brachycera</taxon>
        <taxon>Muscomorpha</taxon>
        <taxon>Ephydroidea</taxon>
        <taxon>Drosophilidae</taxon>
        <taxon>Drosophila</taxon>
        <taxon>Sophophora</taxon>
    </lineage>
</organism>
<feature type="chain" id="PRO_0000050113" description="Protein held out wings">
    <location>
        <begin position="1"/>
        <end position="405"/>
    </location>
</feature>
<feature type="domain" description="KH" evidence="1 11">
    <location>
        <begin position="142"/>
        <end position="210"/>
    </location>
</feature>
<feature type="splice variant" id="VSP_050197" description="In isoform Maternal." evidence="10">
    <original>VGAIKQQRRLATNREHPYQRATVGVPAKPAGFIEIQ</original>
    <variation>GGLFAR</variation>
    <location>
        <begin position="370"/>
        <end position="405"/>
    </location>
</feature>
<feature type="splice variant" id="VSP_018594" description="In isoform C." evidence="11">
    <original>AIKQQRRLATNREHPYQRATVGVPAKPAGFIEIQ</original>
    <variation>RYMHAGSVF</variation>
    <location>
        <begin position="372"/>
        <end position="405"/>
    </location>
</feature>
<feature type="mutagenesis site" description="Abolished dimerization without affecting ability to regulate dosage compensation." evidence="4">
    <original>E</original>
    <variation>G</variation>
    <location>
        <position position="106"/>
    </location>
</feature>
<feature type="mutagenesis site" description="In allele how-E44; embryonic lethal. Abolished RNA-binding and ability to regulate dosage compensation." evidence="4 5">
    <original>R</original>
    <variation>C</variation>
    <location>
        <position position="185"/>
    </location>
</feature>
<feature type="sequence conflict" description="In Ref. 3 and 7." evidence="11" ref="3 7">
    <original>Q</original>
    <variation>QAQ</variation>
    <location>
        <position position="46"/>
    </location>
</feature>
<feature type="sequence conflict" description="In Ref. 7; AAL40007." evidence="11" ref="7">
    <original>P</original>
    <variation>S</variation>
    <location>
        <position position="52"/>
    </location>
</feature>
<feature type="sequence conflict" description="In Ref. 4; AAB47553." evidence="11" ref="4">
    <original>QT</original>
    <variation>RA</variation>
    <location>
        <begin position="338"/>
        <end position="339"/>
    </location>
</feature>
<feature type="sequence conflict" description="In Ref. 2, 4 and 7." evidence="11" ref="2 4 7">
    <location>
        <position position="370"/>
    </location>
</feature>
<feature type="sequence conflict" description="In Ref. 4; AAB47553." evidence="11" ref="4">
    <original>E</original>
    <variation>A</variation>
    <location>
        <position position="384"/>
    </location>
</feature>
<gene>
    <name type="primary">how</name>
    <name type="synonym">KH93F</name>
    <name type="synonym">qkr93F</name>
    <name type="synonym">stru</name>
    <name type="synonym">who</name>
    <name type="ORF">CG10293</name>
</gene>
<proteinExistence type="evidence at protein level"/>
<name>HOW_DROME</name>
<dbReference type="EMBL" id="U85651">
    <property type="protein sequence ID" value="AAB51251.1"/>
    <property type="molecule type" value="mRNA"/>
</dbReference>
<dbReference type="EMBL" id="U72331">
    <property type="protein sequence ID" value="AAB17350.1"/>
    <property type="molecule type" value="mRNA"/>
</dbReference>
<dbReference type="EMBL" id="AF003106">
    <property type="protein sequence ID" value="AAB60946.1"/>
    <property type="molecule type" value="mRNA"/>
</dbReference>
<dbReference type="EMBL" id="AF003107">
    <property type="protein sequence ID" value="AAB60947.1"/>
    <property type="molecule type" value="mRNA"/>
</dbReference>
<dbReference type="EMBL" id="U87150">
    <property type="protein sequence ID" value="AAB47553.1"/>
    <property type="molecule type" value="mRNA"/>
</dbReference>
<dbReference type="EMBL" id="AE014297">
    <property type="protein sequence ID" value="AAF55952.1"/>
    <property type="molecule type" value="Genomic_DNA"/>
</dbReference>
<dbReference type="EMBL" id="AE014297">
    <property type="protein sequence ID" value="AAN13901.1"/>
    <property type="molecule type" value="Genomic_DNA"/>
</dbReference>
<dbReference type="EMBL" id="AE014297">
    <property type="protein sequence ID" value="AAZ52538.1"/>
    <property type="molecule type" value="Genomic_DNA"/>
</dbReference>
<dbReference type="EMBL" id="AY069862">
    <property type="protein sequence ID" value="AAL40007.1"/>
    <property type="molecule type" value="mRNA"/>
</dbReference>
<dbReference type="RefSeq" id="NP_001027203.1">
    <molecule id="O01367-3"/>
    <property type="nucleotide sequence ID" value="NM_001032032.3"/>
</dbReference>
<dbReference type="RefSeq" id="NP_001163683.1">
    <molecule id="O01367-1"/>
    <property type="nucleotide sequence ID" value="NM_001170212.2"/>
</dbReference>
<dbReference type="RefSeq" id="NP_001163684.1">
    <property type="nucleotide sequence ID" value="NM_001170213.2"/>
</dbReference>
<dbReference type="RefSeq" id="NP_524447.2">
    <molecule id="O01367-1"/>
    <property type="nucleotide sequence ID" value="NM_079723.4"/>
</dbReference>
<dbReference type="RefSeq" id="NP_732695.1">
    <molecule id="O01367-2"/>
    <property type="nucleotide sequence ID" value="NM_169992.3"/>
</dbReference>
<dbReference type="SMR" id="O01367"/>
<dbReference type="BioGRID" id="67557">
    <property type="interactions" value="29"/>
</dbReference>
<dbReference type="FunCoup" id="O01367">
    <property type="interactions" value="1412"/>
</dbReference>
<dbReference type="IntAct" id="O01367">
    <property type="interactions" value="1"/>
</dbReference>
<dbReference type="STRING" id="7227.FBpp0307182"/>
<dbReference type="PaxDb" id="7227-FBpp0083575"/>
<dbReference type="DNASU" id="42596"/>
<dbReference type="EnsemblMetazoa" id="FBtr0084177">
    <molecule id="O01367-1"/>
    <property type="protein sequence ID" value="FBpp0083575"/>
    <property type="gene ID" value="FBgn0264491"/>
</dbReference>
<dbReference type="EnsemblMetazoa" id="FBtr0084178">
    <molecule id="O01367-2"/>
    <property type="protein sequence ID" value="FBpp0083576"/>
    <property type="gene ID" value="FBgn0264491"/>
</dbReference>
<dbReference type="EnsemblMetazoa" id="FBtr0100514">
    <molecule id="O01367-3"/>
    <property type="protein sequence ID" value="FBpp0099954"/>
    <property type="gene ID" value="FBgn0264491"/>
</dbReference>
<dbReference type="EnsemblMetazoa" id="FBtr0301401">
    <molecule id="O01367-1"/>
    <property type="protein sequence ID" value="FBpp0290615"/>
    <property type="gene ID" value="FBgn0264491"/>
</dbReference>
<dbReference type="GeneID" id="42596"/>
<dbReference type="KEGG" id="dme:Dmel_CG10293"/>
<dbReference type="AGR" id="FB:FBgn0264491"/>
<dbReference type="CTD" id="42596"/>
<dbReference type="FlyBase" id="FBgn0264491">
    <property type="gene designation" value="how"/>
</dbReference>
<dbReference type="VEuPathDB" id="VectorBase:FBgn0264491"/>
<dbReference type="eggNOG" id="KOG1588">
    <property type="taxonomic scope" value="Eukaryota"/>
</dbReference>
<dbReference type="GeneTree" id="ENSGT00940000167937"/>
<dbReference type="InParanoid" id="O01367"/>
<dbReference type="OrthoDB" id="6777263at2759"/>
<dbReference type="PhylomeDB" id="O01367"/>
<dbReference type="BioGRID-ORCS" id="42596">
    <property type="hits" value="1 hit in 1 CRISPR screen"/>
</dbReference>
<dbReference type="ChiTaRS" id="how">
    <property type="organism name" value="fly"/>
</dbReference>
<dbReference type="GenomeRNAi" id="42596"/>
<dbReference type="PRO" id="PR:O01367"/>
<dbReference type="Proteomes" id="UP000000803">
    <property type="component" value="Chromosome 3R"/>
</dbReference>
<dbReference type="Bgee" id="FBgn0264491">
    <property type="expression patterns" value="Expressed in surface associated glial cell (Drosophila) in post-embryonic organism and 228 other cell types or tissues"/>
</dbReference>
<dbReference type="ExpressionAtlas" id="O01367">
    <property type="expression patterns" value="baseline and differential"/>
</dbReference>
<dbReference type="GO" id="GO:0005737">
    <property type="term" value="C:cytoplasm"/>
    <property type="evidence" value="ECO:0000314"/>
    <property type="project" value="FlyBase"/>
</dbReference>
<dbReference type="GO" id="GO:0005634">
    <property type="term" value="C:nucleus"/>
    <property type="evidence" value="ECO:0000314"/>
    <property type="project" value="UniProtKB"/>
</dbReference>
<dbReference type="GO" id="GO:0003730">
    <property type="term" value="F:mRNA 3'-UTR binding"/>
    <property type="evidence" value="ECO:0000314"/>
    <property type="project" value="FlyBase"/>
</dbReference>
<dbReference type="GO" id="GO:0048027">
    <property type="term" value="F:mRNA 5'-UTR binding"/>
    <property type="evidence" value="ECO:0000314"/>
    <property type="project" value="UniProtKB"/>
</dbReference>
<dbReference type="GO" id="GO:0003729">
    <property type="term" value="F:mRNA binding"/>
    <property type="evidence" value="ECO:0000314"/>
    <property type="project" value="FlyBase"/>
</dbReference>
<dbReference type="GO" id="GO:0007475">
    <property type="term" value="P:apposition of dorsal and ventral imaginal disc-derived wing surfaces"/>
    <property type="evidence" value="ECO:0000315"/>
    <property type="project" value="FlyBase"/>
</dbReference>
<dbReference type="GO" id="GO:0008366">
    <property type="term" value="P:axon ensheathment"/>
    <property type="evidence" value="ECO:0000315"/>
    <property type="project" value="FlyBase"/>
</dbReference>
<dbReference type="GO" id="GO:0007155">
    <property type="term" value="P:cell adhesion"/>
    <property type="evidence" value="ECO:0000315"/>
    <property type="project" value="UniProtKB"/>
</dbReference>
<dbReference type="GO" id="GO:0030154">
    <property type="term" value="P:cell differentiation"/>
    <property type="evidence" value="ECO:0000304"/>
    <property type="project" value="FlyBase"/>
</dbReference>
<dbReference type="GO" id="GO:0016477">
    <property type="term" value="P:cell migration"/>
    <property type="evidence" value="ECO:0000315"/>
    <property type="project" value="UniProtKB"/>
</dbReference>
<dbReference type="GO" id="GO:0030718">
    <property type="term" value="P:germ-line stem cell population maintenance"/>
    <property type="evidence" value="ECO:0000315"/>
    <property type="project" value="FlyBase"/>
</dbReference>
<dbReference type="GO" id="GO:0008347">
    <property type="term" value="P:glial cell migration"/>
    <property type="evidence" value="ECO:0000315"/>
    <property type="project" value="FlyBase"/>
</dbReference>
<dbReference type="GO" id="GO:0007498">
    <property type="term" value="P:mesoderm development"/>
    <property type="evidence" value="ECO:0000270"/>
    <property type="project" value="FlyBase"/>
</dbReference>
<dbReference type="GO" id="GO:0008078">
    <property type="term" value="P:mesodermal cell migration"/>
    <property type="evidence" value="ECO:0000315"/>
    <property type="project" value="FlyBase"/>
</dbReference>
<dbReference type="GO" id="GO:0016203">
    <property type="term" value="P:muscle attachment"/>
    <property type="evidence" value="ECO:0000315"/>
    <property type="project" value="UniProtKB"/>
</dbReference>
<dbReference type="GO" id="GO:0007521">
    <property type="term" value="P:muscle cell fate determination"/>
    <property type="evidence" value="ECO:0000314"/>
    <property type="project" value="UniProtKB"/>
</dbReference>
<dbReference type="GO" id="GO:0007517">
    <property type="term" value="P:muscle organ development"/>
    <property type="evidence" value="ECO:0000315"/>
    <property type="project" value="UniProtKB"/>
</dbReference>
<dbReference type="GO" id="GO:0046832">
    <property type="term" value="P:negative regulation of RNA export from nucleus"/>
    <property type="evidence" value="ECO:0000314"/>
    <property type="project" value="UniProtKB"/>
</dbReference>
<dbReference type="GO" id="GO:0007438">
    <property type="term" value="P:oenocyte development"/>
    <property type="evidence" value="ECO:0000315"/>
    <property type="project" value="FlyBase"/>
</dbReference>
<dbReference type="GO" id="GO:0000381">
    <property type="term" value="P:regulation of alternative mRNA splicing, via spliceosome"/>
    <property type="evidence" value="ECO:0000315"/>
    <property type="project" value="FlyBase"/>
</dbReference>
<dbReference type="GO" id="GO:0045995">
    <property type="term" value="P:regulation of embryonic development"/>
    <property type="evidence" value="ECO:0000315"/>
    <property type="project" value="FlyBase"/>
</dbReference>
<dbReference type="GO" id="GO:0008016">
    <property type="term" value="P:regulation of heart contraction"/>
    <property type="evidence" value="ECO:0000315"/>
    <property type="project" value="UniProtKB"/>
</dbReference>
<dbReference type="GO" id="GO:0048024">
    <property type="term" value="P:regulation of mRNA splicing, via spliceosome"/>
    <property type="evidence" value="ECO:0000318"/>
    <property type="project" value="GO_Central"/>
</dbReference>
<dbReference type="GO" id="GO:0045214">
    <property type="term" value="P:sarcomere organization"/>
    <property type="evidence" value="ECO:0000315"/>
    <property type="project" value="FlyBase"/>
</dbReference>
<dbReference type="GO" id="GO:0007525">
    <property type="term" value="P:somatic muscle development"/>
    <property type="evidence" value="ECO:0000315"/>
    <property type="project" value="FlyBase"/>
</dbReference>
<dbReference type="GO" id="GO:0007284">
    <property type="term" value="P:spermatogonial cell division"/>
    <property type="evidence" value="ECO:0000315"/>
    <property type="project" value="FlyBase"/>
</dbReference>
<dbReference type="CDD" id="cd22466">
    <property type="entry name" value="KH-I_HOW"/>
    <property type="match status" value="1"/>
</dbReference>
<dbReference type="FunFam" id="1.20.5.4010:FF:000002">
    <property type="entry name" value="Held out wings, isoform D"/>
    <property type="match status" value="1"/>
</dbReference>
<dbReference type="FunFam" id="3.30.1370.10:FF:000055">
    <property type="entry name" value="protein quaking isoform X1"/>
    <property type="match status" value="1"/>
</dbReference>
<dbReference type="Gene3D" id="1.20.5.4010">
    <property type="match status" value="1"/>
</dbReference>
<dbReference type="Gene3D" id="3.30.1370.10">
    <property type="entry name" value="K Homology domain, type 1"/>
    <property type="match status" value="1"/>
</dbReference>
<dbReference type="InterPro" id="IPR045071">
    <property type="entry name" value="BBP-like"/>
</dbReference>
<dbReference type="InterPro" id="IPR055256">
    <property type="entry name" value="KH_1_KHDC4/BBP-like"/>
</dbReference>
<dbReference type="InterPro" id="IPR004087">
    <property type="entry name" value="KH_dom"/>
</dbReference>
<dbReference type="InterPro" id="IPR036612">
    <property type="entry name" value="KH_dom_type_1_sf"/>
</dbReference>
<dbReference type="InterPro" id="IPR032377">
    <property type="entry name" value="STAR_dimer"/>
</dbReference>
<dbReference type="PANTHER" id="PTHR11208:SF125">
    <property type="entry name" value="KH DOMAIN-CONTAINING RNA-BINDING PROTEIN QKI"/>
    <property type="match status" value="1"/>
</dbReference>
<dbReference type="PANTHER" id="PTHR11208">
    <property type="entry name" value="RNA-BINDING PROTEIN RELATED"/>
    <property type="match status" value="1"/>
</dbReference>
<dbReference type="Pfam" id="PF22675">
    <property type="entry name" value="KH-I_KHDC4-BBP"/>
    <property type="match status" value="1"/>
</dbReference>
<dbReference type="Pfam" id="PF16544">
    <property type="entry name" value="STAR_dimer"/>
    <property type="match status" value="1"/>
</dbReference>
<dbReference type="SMART" id="SM00322">
    <property type="entry name" value="KH"/>
    <property type="match status" value="1"/>
</dbReference>
<dbReference type="SUPFAM" id="SSF54791">
    <property type="entry name" value="Eukaryotic type KH-domain (KH-domain type I)"/>
    <property type="match status" value="1"/>
</dbReference>
<dbReference type="PROSITE" id="PS50084">
    <property type="entry name" value="KH_TYPE_1"/>
    <property type="match status" value="1"/>
</dbReference>
<sequence length="405" mass="44325">MSVCESKAVVQQQLQQHLQQQAAAAVVAVAQQQQAQAQAQAQAQAQQQQQAPQVVVPMTPQHLTPQQQQQSTQSIADYLAQLLKDRKQLAAFPNVFTHVERLLDEEIARVRASLFQINGVKKEPLTLPEPEGSVVTMNEKVYVPVREHPDFNFVGRILGPRGMTAKQLEQETGCKIMVRGKGSMRDKKKEDANRGKPNWEHLSDDLHVLITVEDTENRATVKLAQAVAEVQKLLVPQAEGEDELKKRQLMELAIINGTYRDTTAKSVAVCDEEWRRLVAASDSRLLTSTGLPGLAAQIRAPAAAPLGAPLILNPRMTVPTTAASILSAQAAPTAAFDQTGHGMIFAPYDYANYAALAGNPLLTEYADHSVGAIKQQRRLATNREHPYQRATVGVPAKPAGFIEIQ</sequence>
<comment type="function">
    <text evidence="4 5 6 8">RNA-binding protein involved in muscle development and dosage compensation (PubMed:23788626, PubMed:9118803, PubMed:9169854, PubMed:9344542). Vital role in steroid regulation of muscle development and to control heart rate (PubMed:9169854). Required during embryogenesis, in late stages of somatic muscle development, for myotube migration and during metamorphosis for muscle reorganization (PubMed:9118803). Required for integrin-mediated cell-adhesion in wing blade (PubMed:9344542). Together with Sxl, acts as an inhibitor of dosage compensation in females by preventing production of msl-2 protein, an essential component of the MSL complex (PubMed:23788626). Specifically binds to the 5'-UTR of msl-2 transcripts and cooperates with Sxl to promote nuclear retention of msl-2 mRNAs (PubMed:23788626).</text>
</comment>
<comment type="subunit">
    <text evidence="4">Homodimer (PubMed:23788626). Interacts with Sxl; promoting nuclear retention of msl-2 transcripts (PubMed:23788626).</text>
</comment>
<comment type="subcellular location">
    <subcellularLocation>
        <location evidence="4 6">Nucleus</location>
    </subcellularLocation>
</comment>
<comment type="alternative products">
    <event type="alternative splicing"/>
    <isoform>
        <id>O01367-1</id>
        <name evidence="8">Zygotic</name>
        <name evidence="9">A</name>
        <sequence type="displayed"/>
    </isoform>
    <isoform>
        <id>O01367-2</id>
        <name evidence="8">Maternal</name>
        <name evidence="9">B</name>
        <sequence type="described" ref="VSP_050197"/>
    </isoform>
    <isoform>
        <id>O01367-3</id>
        <name>C</name>
        <sequence type="described" ref="VSP_018594"/>
    </isoform>
</comment>
<comment type="tissue specificity">
    <text evidence="5 7 8">During embryogenesis, expression is seen in mesodermal precursors of somatic, visceral and pharyngeal muscle. Later in embryogenesis, expression is restricted to heart and muscle attachment sites of the epidermis. During onset of metamorphosis, expression is seen in muscle and muscle attachment cells.</text>
</comment>
<comment type="developmental stage">
    <text evidence="7 8">Expressed both maternally and zygotically during embryonic, larval and pupal development.</text>
</comment>
<comment type="induction">
    <text evidence="5">By 20-hydroxyecdysone at the onset of metamorphosis.</text>
</comment>
<comment type="disruption phenotype">
    <text evidence="8">Flies exhibit wing blisters and flight impairment.</text>
</comment>
<keyword id="KW-0025">Alternative splicing</keyword>
<keyword id="KW-0217">Developmental protein</keyword>
<keyword id="KW-0539">Nucleus</keyword>
<keyword id="KW-1185">Reference proteome</keyword>
<keyword id="KW-0694">RNA-binding</keyword>
<accession>O01367</accession>
<accession>O02392</accession>
<accession>P91680</accession>
<accession>Q4AB28</accession>
<accession>Q8IN11</accession>
<accession>Q8T999</accession>
<accession>Q94539</accession>
<protein>
    <recommendedName>
        <fullName>Protein held out wings</fullName>
    </recommendedName>
    <alternativeName>
        <fullName>KH domain protein KH93F</fullName>
    </alternativeName>
    <alternativeName>
        <fullName>Protein muscle-specific</fullName>
    </alternativeName>
    <alternativeName>
        <fullName>Protein struthio</fullName>
    </alternativeName>
    <alternativeName>
        <fullName>Protein wings held out</fullName>
    </alternativeName>
    <alternativeName>
        <fullName>Putative RNA-binding protein</fullName>
    </alternativeName>
    <alternativeName>
        <fullName>Quaking-related 93F</fullName>
    </alternativeName>
</protein>
<evidence type="ECO:0000255" key="1">
    <source>
        <dbReference type="PROSITE-ProRule" id="PRU00117"/>
    </source>
</evidence>
<evidence type="ECO:0000269" key="2">
    <source>
    </source>
</evidence>
<evidence type="ECO:0000269" key="3">
    <source>
    </source>
</evidence>
<evidence type="ECO:0000269" key="4">
    <source>
    </source>
</evidence>
<evidence type="ECO:0000269" key="5">
    <source>
    </source>
</evidence>
<evidence type="ECO:0000269" key="6">
    <source>
    </source>
</evidence>
<evidence type="ECO:0000269" key="7">
    <source>
    </source>
</evidence>
<evidence type="ECO:0000269" key="8">
    <source>
    </source>
</evidence>
<evidence type="ECO:0000303" key="9">
    <source>
    </source>
</evidence>
<evidence type="ECO:0000303" key="10">
    <source>
    </source>
</evidence>
<evidence type="ECO:0000305" key="11"/>
<evidence type="ECO:0000312" key="12">
    <source>
        <dbReference type="EMBL" id="AAN13901.1"/>
    </source>
</evidence>